<proteinExistence type="inferred from homology"/>
<accession>Q05427</accession>
<reference key="1">
    <citation type="journal article" date="1993" name="Gene">
        <title>Identification of a putative infC-rpmI-rplT operon flanked by long inverted repeats in Mycoplasma fermentans (incognitus strain).</title>
        <authorList>
            <person name="Hu W.S."/>
            <person name="Wang R.Y.-H."/>
            <person name="Shih J.W.-K."/>
            <person name="Lo S.-C."/>
        </authorList>
    </citation>
    <scope>NUCLEOTIDE SEQUENCE [GENOMIC DNA]</scope>
    <source>
        <strain>Incognitus</strain>
    </source>
</reference>
<sequence length="116" mass="13432">MRVKGGTVTRARRKKWLKLAKGYFGHKSIGYKVAKQAVVKSWTYAFRDRKQIKREFRKLWIARINAATRAEGLSYSKFINGLKRANVTINRKMLSELAISEPKTFAMLIKIARDAK</sequence>
<keyword id="KW-0687">Ribonucleoprotein</keyword>
<keyword id="KW-0689">Ribosomal protein</keyword>
<keyword id="KW-0694">RNA-binding</keyword>
<keyword id="KW-0699">rRNA-binding</keyword>
<comment type="function">
    <text evidence="1">Binds directly to 23S ribosomal RNA and is necessary for the in vitro assembly process of the 50S ribosomal subunit. It is not involved in the protein synthesizing functions of that subunit (By similarity).</text>
</comment>
<comment type="similarity">
    <text evidence="2">Belongs to the bacterial ribosomal protein bL20 family.</text>
</comment>
<feature type="chain" id="PRO_0000177179" description="Large ribosomal subunit protein bL20">
    <location>
        <begin position="1"/>
        <end position="116"/>
    </location>
</feature>
<name>RL20_MYCFE</name>
<organism>
    <name type="scientific">Mycoplasmopsis fermentans</name>
    <name type="common">Mycoplasma fermentans</name>
    <dbReference type="NCBI Taxonomy" id="2115"/>
    <lineage>
        <taxon>Bacteria</taxon>
        <taxon>Bacillati</taxon>
        <taxon>Mycoplasmatota</taxon>
        <taxon>Mycoplasmoidales</taxon>
        <taxon>Metamycoplasmataceae</taxon>
        <taxon>Mycoplasmopsis</taxon>
    </lineage>
</organism>
<evidence type="ECO:0000250" key="1"/>
<evidence type="ECO:0000305" key="2"/>
<dbReference type="EMBL" id="M95046">
    <property type="protein sequence ID" value="AAA25415.1"/>
    <property type="molecule type" value="Genomic_DNA"/>
</dbReference>
<dbReference type="PIR" id="JN0655">
    <property type="entry name" value="JN0655"/>
</dbReference>
<dbReference type="SMR" id="Q05427"/>
<dbReference type="GO" id="GO:1990904">
    <property type="term" value="C:ribonucleoprotein complex"/>
    <property type="evidence" value="ECO:0007669"/>
    <property type="project" value="UniProtKB-KW"/>
</dbReference>
<dbReference type="GO" id="GO:0005840">
    <property type="term" value="C:ribosome"/>
    <property type="evidence" value="ECO:0007669"/>
    <property type="project" value="UniProtKB-KW"/>
</dbReference>
<dbReference type="GO" id="GO:0019843">
    <property type="term" value="F:rRNA binding"/>
    <property type="evidence" value="ECO:0007669"/>
    <property type="project" value="UniProtKB-UniRule"/>
</dbReference>
<dbReference type="GO" id="GO:0003735">
    <property type="term" value="F:structural constituent of ribosome"/>
    <property type="evidence" value="ECO:0007669"/>
    <property type="project" value="InterPro"/>
</dbReference>
<dbReference type="GO" id="GO:0000027">
    <property type="term" value="P:ribosomal large subunit assembly"/>
    <property type="evidence" value="ECO:0007669"/>
    <property type="project" value="UniProtKB-UniRule"/>
</dbReference>
<dbReference type="GO" id="GO:0006412">
    <property type="term" value="P:translation"/>
    <property type="evidence" value="ECO:0007669"/>
    <property type="project" value="InterPro"/>
</dbReference>
<dbReference type="CDD" id="cd07026">
    <property type="entry name" value="Ribosomal_L20"/>
    <property type="match status" value="1"/>
</dbReference>
<dbReference type="FunFam" id="1.10.1900.20:FF:000001">
    <property type="entry name" value="50S ribosomal protein L20"/>
    <property type="match status" value="1"/>
</dbReference>
<dbReference type="Gene3D" id="6.10.160.10">
    <property type="match status" value="1"/>
</dbReference>
<dbReference type="Gene3D" id="1.10.1900.20">
    <property type="entry name" value="Ribosomal protein L20"/>
    <property type="match status" value="1"/>
</dbReference>
<dbReference type="HAMAP" id="MF_00382">
    <property type="entry name" value="Ribosomal_bL20"/>
    <property type="match status" value="1"/>
</dbReference>
<dbReference type="InterPro" id="IPR005813">
    <property type="entry name" value="Ribosomal_bL20"/>
</dbReference>
<dbReference type="InterPro" id="IPR049946">
    <property type="entry name" value="RIBOSOMAL_L20_CS"/>
</dbReference>
<dbReference type="InterPro" id="IPR035566">
    <property type="entry name" value="Ribosomal_protein_bL20_C"/>
</dbReference>
<dbReference type="NCBIfam" id="TIGR01032">
    <property type="entry name" value="rplT_bact"/>
    <property type="match status" value="1"/>
</dbReference>
<dbReference type="PANTHER" id="PTHR10986">
    <property type="entry name" value="39S RIBOSOMAL PROTEIN L20"/>
    <property type="match status" value="1"/>
</dbReference>
<dbReference type="Pfam" id="PF00453">
    <property type="entry name" value="Ribosomal_L20"/>
    <property type="match status" value="1"/>
</dbReference>
<dbReference type="PRINTS" id="PR00062">
    <property type="entry name" value="RIBOSOMALL20"/>
</dbReference>
<dbReference type="SUPFAM" id="SSF74731">
    <property type="entry name" value="Ribosomal protein L20"/>
    <property type="match status" value="1"/>
</dbReference>
<dbReference type="PROSITE" id="PS00937">
    <property type="entry name" value="RIBOSOMAL_L20"/>
    <property type="match status" value="1"/>
</dbReference>
<protein>
    <recommendedName>
        <fullName evidence="2">Large ribosomal subunit protein bL20</fullName>
    </recommendedName>
    <alternativeName>
        <fullName>50S ribosomal protein L20</fullName>
    </alternativeName>
</protein>
<gene>
    <name type="primary">rplT</name>
</gene>